<name>AMPE_GLOBR</name>
<organism>
    <name type="scientific">Gloydius brevicauda</name>
    <name type="common">Korean slamosa snake</name>
    <name type="synonym">Agkistrodon halys brevicaudus</name>
    <dbReference type="NCBI Taxonomy" id="3148161"/>
    <lineage>
        <taxon>Eukaryota</taxon>
        <taxon>Metazoa</taxon>
        <taxon>Chordata</taxon>
        <taxon>Craniata</taxon>
        <taxon>Vertebrata</taxon>
        <taxon>Euteleostomi</taxon>
        <taxon>Lepidosauria</taxon>
        <taxon>Squamata</taxon>
        <taxon>Bifurcata</taxon>
        <taxon>Unidentata</taxon>
        <taxon>Episquamata</taxon>
        <taxon>Toxicofera</taxon>
        <taxon>Serpentes</taxon>
        <taxon>Colubroidea</taxon>
        <taxon>Viperidae</taxon>
        <taxon>Crotalinae</taxon>
        <taxon>Gloydius</taxon>
    </lineage>
</organism>
<comment type="function">
    <text evidence="1 2 11">Venom protein that cleaves N-terminal acidic residues from peptides with high potency in presence of calcium (PubMed:17383704). It may have several roles in venom including alteration of blood pressure by cleaving circulating angiotensin-2, general degradation of host tissue, increase of permeability to other venom components, and/or processing of other toxins in the venom (By similarity).</text>
</comment>
<comment type="catalytic activity">
    <reaction evidence="11">
        <text>Release of N-terminal glutamate (and to a lesser extent aspartate) from a peptide.</text>
        <dbReference type="EC" id="3.4.11.7"/>
    </reaction>
</comment>
<comment type="cofactor">
    <cofactor evidence="3">
        <name>Zn(2+)</name>
        <dbReference type="ChEBI" id="CHEBI:29105"/>
    </cofactor>
    <text evidence="3">Binds 1 zinc ion per subunit.</text>
</comment>
<comment type="activity regulation">
    <text evidence="11">The partially purified protein is inhibited by the aminopeptidase competitive inhibitors amastatin (Leu and acidic inhibitor), and bestatin (Leu inhibitor), by chelating agents EDTA, and 1,10-Phenanthroline, as well as by Zn(2+) ions. Substrate specificity is modulated by Ca(2+), Ba(2+), and Mn(2+) ions which enhances the enzymatic activity for cleavage of acidic residues.</text>
</comment>
<comment type="biophysicochemical properties">
    <phDependence>
        <text evidence="11">Optimum pH is 7.4 (measured only for partially purified enzyme).</text>
    </phDependence>
</comment>
<comment type="subunit">
    <text evidence="3">Homodimer; disulfide-linked.</text>
</comment>
<comment type="subcellular location">
    <subcellularLocation>
        <location evidence="3">Cell membrane</location>
        <topology evidence="4">Single-pass type II membrane protein</topology>
    </subcellularLocation>
    <text evidence="2">Found in the venom as transmembrane proteins in exosome-like vesicles.</text>
</comment>
<comment type="similarity">
    <text evidence="13">Belongs to the peptidase M1 family.</text>
</comment>
<comment type="sequence caution" evidence="13">
    <conflict type="erroneous initiation">
        <sequence resource="EMBL-CDS" id="BAF63164"/>
    </conflict>
    <text>Truncated N-terminus.</text>
</comment>
<reference evidence="15" key="1">
    <citation type="journal article" date="2007" name="Toxicon">
        <title>Characterization and cDNA cloning of aminopeptidase A from the venom of Gloydius blomhoffi brevicaudus.</title>
        <authorList>
            <person name="Ogawa Y."/>
            <person name="Murayama N."/>
            <person name="Fujita Y."/>
            <person name="Yanoshita R."/>
        </authorList>
    </citation>
    <scope>NUCLEOTIDE SEQUENCE [MRNA]</scope>
    <scope>PROTEIN SEQUENCE OF 211-223; 500-507; 544-559; 594-613 AND 937-955</scope>
    <scope>FUNCTION</scope>
    <scope>CATALYTIC ACTIVITY</scope>
    <scope>ACTIVITY REGULATION</scope>
    <scope>BIOPHYSICOCHEMICAL PROPERTIES</scope>
    <source>
        <tissue>Venom</tissue>
        <tissue>Venom gland</tissue>
    </source>
</reference>
<keyword id="KW-0031">Aminopeptidase</keyword>
<keyword id="KW-0106">Calcium</keyword>
<keyword id="KW-1003">Cell membrane</keyword>
<keyword id="KW-0903">Direct protein sequencing</keyword>
<keyword id="KW-1015">Disulfide bond</keyword>
<keyword id="KW-0325">Glycoprotein</keyword>
<keyword id="KW-0378">Hydrolase</keyword>
<keyword id="KW-0472">Membrane</keyword>
<keyword id="KW-0479">Metal-binding</keyword>
<keyword id="KW-0482">Metalloprotease</keyword>
<keyword id="KW-0645">Protease</keyword>
<keyword id="KW-0735">Signal-anchor</keyword>
<keyword id="KW-0812">Transmembrane</keyword>
<keyword id="KW-1133">Transmembrane helix</keyword>
<keyword id="KW-0862">Zinc</keyword>
<feature type="chain" id="PRO_0000455652" description="Aminopeptidase A" evidence="14">
    <location>
        <begin position="1"/>
        <end position="955"/>
    </location>
</feature>
<feature type="topological domain" description="Cytoplasmic" evidence="4">
    <location>
        <begin position="1"/>
        <end position="17"/>
    </location>
</feature>
<feature type="transmembrane region" description="Helical; Signal-anchor for type II membrane protein" evidence="4">
    <location>
        <begin position="18"/>
        <end position="38"/>
    </location>
</feature>
<feature type="topological domain" description="Extracellular" evidence="4">
    <location>
        <begin position="39"/>
        <end position="955"/>
    </location>
</feature>
<feature type="region of interest" description="Disordered" evidence="10">
    <location>
        <begin position="49"/>
        <end position="69"/>
    </location>
</feature>
<feature type="compositionally biased region" description="Low complexity" evidence="10">
    <location>
        <begin position="55"/>
        <end position="69"/>
    </location>
</feature>
<feature type="active site" description="Proton acceptor" evidence="5">
    <location>
        <position position="389"/>
    </location>
</feature>
<feature type="binding site" evidence="6">
    <location>
        <position position="218"/>
    </location>
    <ligand>
        <name>substrate</name>
    </ligand>
</feature>
<feature type="binding site" evidence="6">
    <location>
        <begin position="352"/>
        <end position="356"/>
    </location>
    <ligand>
        <name>substrate</name>
    </ligand>
</feature>
<feature type="binding site" evidence="8">
    <location>
        <position position="388"/>
    </location>
    <ligand>
        <name>Zn(2+)</name>
        <dbReference type="ChEBI" id="CHEBI:29105"/>
        <note>catalytic</note>
    </ligand>
</feature>
<feature type="binding site" evidence="8">
    <location>
        <position position="392"/>
    </location>
    <ligand>
        <name>Zn(2+)</name>
        <dbReference type="ChEBI" id="CHEBI:29105"/>
        <note>catalytic</note>
    </ligand>
</feature>
<feature type="binding site" evidence="8">
    <location>
        <position position="411"/>
    </location>
    <ligand>
        <name>Zn(2+)</name>
        <dbReference type="ChEBI" id="CHEBI:29105"/>
        <note>catalytic</note>
    </ligand>
</feature>
<feature type="binding site" evidence="6">
    <location>
        <position position="882"/>
    </location>
    <ligand>
        <name>substrate</name>
    </ligand>
</feature>
<feature type="site" description="Binds calcium which modulates its enzyme activity" evidence="7">
    <location>
        <position position="216"/>
    </location>
</feature>
<feature type="site" description="Transition state stabilizer" evidence="7">
    <location>
        <position position="474"/>
    </location>
</feature>
<feature type="glycosylation site" description="N-linked (GlcNAc...) asparagine" evidence="9">
    <location>
        <position position="65"/>
    </location>
</feature>
<feature type="glycosylation site" description="N-linked (GlcNAc...) asparagine" evidence="9">
    <location>
        <position position="118"/>
    </location>
</feature>
<feature type="glycosylation site" description="N-linked (GlcNAc...) asparagine" evidence="9">
    <location>
        <position position="192"/>
    </location>
</feature>
<feature type="glycosylation site" description="N-linked (GlcNAc...) asparagine" evidence="9">
    <location>
        <position position="312"/>
    </location>
</feature>
<feature type="glycosylation site" description="N-linked (GlcNAc...) asparagine" evidence="9">
    <location>
        <position position="319"/>
    </location>
</feature>
<feature type="glycosylation site" description="N-linked (GlcNAc...) asparagine" evidence="9">
    <location>
        <position position="335"/>
    </location>
</feature>
<feature type="glycosylation site" description="N-linked (GlcNAc...) asparagine" evidence="9">
    <location>
        <position position="458"/>
    </location>
</feature>
<feature type="glycosylation site" description="N-linked (GlcNAc...) asparagine" evidence="9">
    <location>
        <position position="547"/>
    </location>
</feature>
<feature type="glycosylation site" description="N-linked (GlcNAc...) asparagine" evidence="9">
    <location>
        <position position="584"/>
    </location>
</feature>
<feature type="glycosylation site" description="N-linked (GlcNAc...) asparagine" evidence="9">
    <location>
        <position position="592"/>
    </location>
</feature>
<feature type="glycosylation site" description="N-linked (GlcNAc...) asparagine" evidence="9">
    <location>
        <position position="647"/>
    </location>
</feature>
<feature type="glycosylation site" description="N-linked (GlcNAc...) asparagine" evidence="9">
    <location>
        <position position="674"/>
    </location>
</feature>
<feature type="glycosylation site" description="N-linked (GlcNAc...) asparagine" evidence="9">
    <location>
        <position position="681"/>
    </location>
</feature>
<feature type="glycosylation site" description="N-linked (GlcNAc...) asparagine" evidence="9">
    <location>
        <position position="759"/>
    </location>
</feature>
<feature type="glycosylation site" description="N-linked (GlcNAc...) asparagine" evidence="9">
    <location>
        <position position="766"/>
    </location>
</feature>
<feature type="glycosylation site" description="N-linked (GlcNAc...) asparagine" evidence="9">
    <location>
        <position position="823"/>
    </location>
</feature>
<feature type="glycosylation site" description="N-linked (GlcNAc...) asparagine" evidence="9">
    <location>
        <position position="836"/>
    </location>
</feature>
<dbReference type="EC" id="3.4.11.7" evidence="11"/>
<dbReference type="EMBL" id="AB262071">
    <property type="protein sequence ID" value="BAF63164.1"/>
    <property type="status" value="ALT_INIT"/>
    <property type="molecule type" value="mRNA"/>
</dbReference>
<dbReference type="SMR" id="A5HUI5"/>
<dbReference type="MEROPS" id="M01.003"/>
<dbReference type="GO" id="GO:0005737">
    <property type="term" value="C:cytoplasm"/>
    <property type="evidence" value="ECO:0007669"/>
    <property type="project" value="TreeGrafter"/>
</dbReference>
<dbReference type="GO" id="GO:0005615">
    <property type="term" value="C:extracellular space"/>
    <property type="evidence" value="ECO:0007669"/>
    <property type="project" value="TreeGrafter"/>
</dbReference>
<dbReference type="GO" id="GO:0005886">
    <property type="term" value="C:plasma membrane"/>
    <property type="evidence" value="ECO:0007669"/>
    <property type="project" value="UniProtKB-SubCell"/>
</dbReference>
<dbReference type="GO" id="GO:0004230">
    <property type="term" value="F:glutamyl aminopeptidase activity"/>
    <property type="evidence" value="ECO:0007669"/>
    <property type="project" value="UniProtKB-EC"/>
</dbReference>
<dbReference type="GO" id="GO:0070006">
    <property type="term" value="F:metalloaminopeptidase activity"/>
    <property type="evidence" value="ECO:0007669"/>
    <property type="project" value="TreeGrafter"/>
</dbReference>
<dbReference type="GO" id="GO:0042277">
    <property type="term" value="F:peptide binding"/>
    <property type="evidence" value="ECO:0007669"/>
    <property type="project" value="TreeGrafter"/>
</dbReference>
<dbReference type="GO" id="GO:0008270">
    <property type="term" value="F:zinc ion binding"/>
    <property type="evidence" value="ECO:0007669"/>
    <property type="project" value="InterPro"/>
</dbReference>
<dbReference type="GO" id="GO:0043171">
    <property type="term" value="P:peptide catabolic process"/>
    <property type="evidence" value="ECO:0007669"/>
    <property type="project" value="TreeGrafter"/>
</dbReference>
<dbReference type="GO" id="GO:0006508">
    <property type="term" value="P:proteolysis"/>
    <property type="evidence" value="ECO:0007669"/>
    <property type="project" value="UniProtKB-KW"/>
</dbReference>
<dbReference type="GO" id="GO:0008217">
    <property type="term" value="P:regulation of blood pressure"/>
    <property type="evidence" value="ECO:0007669"/>
    <property type="project" value="TreeGrafter"/>
</dbReference>
<dbReference type="CDD" id="cd09601">
    <property type="entry name" value="M1_APN-Q_like"/>
    <property type="match status" value="1"/>
</dbReference>
<dbReference type="FunFam" id="1.25.50.20:FF:000001">
    <property type="entry name" value="Aminopeptidase"/>
    <property type="match status" value="1"/>
</dbReference>
<dbReference type="FunFam" id="2.60.40.1730:FF:000006">
    <property type="entry name" value="Aminopeptidase"/>
    <property type="match status" value="1"/>
</dbReference>
<dbReference type="FunFam" id="2.60.40.1910:FF:000003">
    <property type="entry name" value="Aminopeptidase"/>
    <property type="match status" value="1"/>
</dbReference>
<dbReference type="FunFam" id="1.10.390.10:FF:000016">
    <property type="entry name" value="Glutamyl aminopeptidase"/>
    <property type="match status" value="1"/>
</dbReference>
<dbReference type="Gene3D" id="1.25.50.20">
    <property type="match status" value="1"/>
</dbReference>
<dbReference type="Gene3D" id="2.60.40.1910">
    <property type="match status" value="1"/>
</dbReference>
<dbReference type="Gene3D" id="1.10.390.10">
    <property type="entry name" value="Neutral Protease Domain 2"/>
    <property type="match status" value="1"/>
</dbReference>
<dbReference type="Gene3D" id="2.60.40.1730">
    <property type="entry name" value="tricorn interacting facor f3 domain"/>
    <property type="match status" value="1"/>
</dbReference>
<dbReference type="InterPro" id="IPR045357">
    <property type="entry name" value="Aminopeptidase_N-like_N"/>
</dbReference>
<dbReference type="InterPro" id="IPR042097">
    <property type="entry name" value="Aminopeptidase_N-like_N_sf"/>
</dbReference>
<dbReference type="InterPro" id="IPR024571">
    <property type="entry name" value="ERAP1-like_C_dom"/>
</dbReference>
<dbReference type="InterPro" id="IPR034016">
    <property type="entry name" value="M1_APN-typ"/>
</dbReference>
<dbReference type="InterPro" id="IPR001930">
    <property type="entry name" value="Peptidase_M1"/>
</dbReference>
<dbReference type="InterPro" id="IPR050344">
    <property type="entry name" value="Peptidase_M1_aminopeptidases"/>
</dbReference>
<dbReference type="InterPro" id="IPR014782">
    <property type="entry name" value="Peptidase_M1_dom"/>
</dbReference>
<dbReference type="InterPro" id="IPR027268">
    <property type="entry name" value="Peptidase_M4/M1_CTD_sf"/>
</dbReference>
<dbReference type="PANTHER" id="PTHR11533:SF276">
    <property type="entry name" value="GLUTAMYL AMINOPEPTIDASE"/>
    <property type="match status" value="1"/>
</dbReference>
<dbReference type="PANTHER" id="PTHR11533">
    <property type="entry name" value="PROTEASE M1 ZINC METALLOPROTEASE"/>
    <property type="match status" value="1"/>
</dbReference>
<dbReference type="Pfam" id="PF11838">
    <property type="entry name" value="ERAP1_C"/>
    <property type="match status" value="1"/>
</dbReference>
<dbReference type="Pfam" id="PF01433">
    <property type="entry name" value="Peptidase_M1"/>
    <property type="match status" value="1"/>
</dbReference>
<dbReference type="Pfam" id="PF17900">
    <property type="entry name" value="Peptidase_M1_N"/>
    <property type="match status" value="1"/>
</dbReference>
<dbReference type="PRINTS" id="PR00756">
    <property type="entry name" value="ALADIPTASE"/>
</dbReference>
<dbReference type="SUPFAM" id="SSF63737">
    <property type="entry name" value="Leukotriene A4 hydrolase N-terminal domain"/>
    <property type="match status" value="1"/>
</dbReference>
<dbReference type="SUPFAM" id="SSF55486">
    <property type="entry name" value="Metalloproteases ('zincins'), catalytic domain"/>
    <property type="match status" value="1"/>
</dbReference>
<dbReference type="PROSITE" id="PS00142">
    <property type="entry name" value="ZINC_PROTEASE"/>
    <property type="match status" value="1"/>
</dbReference>
<accession>A5HUI5</accession>
<proteinExistence type="evidence at protein level"/>
<protein>
    <recommendedName>
        <fullName evidence="12">Aminopeptidase A</fullName>
        <shortName evidence="13">AP-A</shortName>
        <shortName evidence="12">APA</shortName>
        <ecNumber evidence="11">3.4.11.7</ecNumber>
    </recommendedName>
    <alternativeName>
        <fullName evidence="13">Glutamyl aminopeptidase</fullName>
        <shortName evidence="13">EAP</shortName>
    </alternativeName>
</protein>
<evidence type="ECO:0000250" key="1">
    <source>
        <dbReference type="UniProtKB" id="D3UW23"/>
    </source>
</evidence>
<evidence type="ECO:0000250" key="2">
    <source>
        <dbReference type="UniProtKB" id="P0DQU2"/>
    </source>
</evidence>
<evidence type="ECO:0000250" key="3">
    <source>
        <dbReference type="UniProtKB" id="Q07075"/>
    </source>
</evidence>
<evidence type="ECO:0000255" key="4"/>
<evidence type="ECO:0000255" key="5">
    <source>
        <dbReference type="PIRSR" id="PIRSR633508-1"/>
    </source>
</evidence>
<evidence type="ECO:0000255" key="6">
    <source>
        <dbReference type="PIRSR" id="PIRSR633508-2"/>
    </source>
</evidence>
<evidence type="ECO:0000255" key="7">
    <source>
        <dbReference type="PIRSR" id="PIRSR633508-3"/>
    </source>
</evidence>
<evidence type="ECO:0000255" key="8">
    <source>
        <dbReference type="PIRSR" id="PIRSR633508-4"/>
    </source>
</evidence>
<evidence type="ECO:0000255" key="9">
    <source>
        <dbReference type="PROSITE-ProRule" id="PRU00498"/>
    </source>
</evidence>
<evidence type="ECO:0000256" key="10">
    <source>
        <dbReference type="SAM" id="MobiDB-lite"/>
    </source>
</evidence>
<evidence type="ECO:0000269" key="11">
    <source>
    </source>
</evidence>
<evidence type="ECO:0000303" key="12">
    <source>
    </source>
</evidence>
<evidence type="ECO:0000305" key="13"/>
<evidence type="ECO:0000305" key="14">
    <source>
    </source>
</evidence>
<evidence type="ECO:0000312" key="15">
    <source>
        <dbReference type="EMBL" id="BAF63164.1"/>
    </source>
</evidence>
<sequence length="955" mass="109837">MDIEDKSSKMHCMKGKHVAIICGVVIAVGLILGLGLGLGLKPEACNPPEDNGLLSTKPPTTSTPNVTNPSGSSVFCSAKNDENGAWTNFRLPNYVQPVHYDLDLTPEMEAEVYTGMVNISIRLEEQTTRHLWLHLRETKITEMPQLRTSSGQVIEIKRCFGYEPQEYVVIEAEEDLRPGNYFLSMKFKGYLNGSLVGFYSTTYGENGKTKYIAATDHEPTDARKSFPCFDEPNKKATYTISITHEHDYEAISNMPVEKTISLDNKWTKTIFKKSVPMSTYLVAWAVHQFKYEERISSRGIPLRVYAQPQQINTTIYAANVTKVVFDYFENYFNMNYSLPKLDKIAIPDFGTGAMENWGLITYRETNLLYDSQESAASNKQRVAAVVAHELVHQWFGNIVTMDWWDDLWLNEGFASFFEFMGVNAKEEKWQMLDQILIDDLLPVLKDDSLVSSHPITVNVSSPDEITSVFDGISYSKGASILRMLEDWISPDHFRAGCQKYLTDHYFKNAKTDDFWKAMEEVSGKPVREVMDTWTRQMGYPVLKVDLNSTVTQQRFLLDPKADPSKPSSQFSYKWNIPVKWKEGNTSSITFYNKSELAGITIMQPSDLPPDSFLKVNKDHVGFYRVNYEPQVWRTLADIMMKDHQNFNLTDRAGFIDDAFALARAGLLKYADALNLTRYLQNETEYIPWQRAVVAVSYIGQMVEDDKALYPKFQRYFGSLVKPIASELKWENDEDHIKSLLRTTVLEFACNMDDPEALGNASLLFKNWTSGISLDVNLRLLVYRFGMQNSGDEQAWNYMFEKYRTATLAQEKEKLLYGLASVKNITLLNRFLNCIKNTTLIRSQDVFTVLRYISFNSYGKTMAWDWVRLNWEYLVKRYTLNDRNLGRLISRISGTFNTELQLWQMENFFERYPDAGAGEASRKQALETTKSNIEWLKQYRDDVATWLENSEQPNFV</sequence>